<evidence type="ECO:0000255" key="1">
    <source>
        <dbReference type="HAMAP-Rule" id="MF_00739"/>
    </source>
</evidence>
<comment type="catalytic activity">
    <reaction evidence="1">
        <text>urea + 2 H2O + H(+) = hydrogencarbonate + 2 NH4(+)</text>
        <dbReference type="Rhea" id="RHEA:20557"/>
        <dbReference type="ChEBI" id="CHEBI:15377"/>
        <dbReference type="ChEBI" id="CHEBI:15378"/>
        <dbReference type="ChEBI" id="CHEBI:16199"/>
        <dbReference type="ChEBI" id="CHEBI:17544"/>
        <dbReference type="ChEBI" id="CHEBI:28938"/>
        <dbReference type="EC" id="3.5.1.5"/>
    </reaction>
</comment>
<comment type="pathway">
    <text evidence="1">Nitrogen metabolism; urea degradation; CO(2) and NH(3) from urea (urease route): step 1/1.</text>
</comment>
<comment type="subunit">
    <text evidence="1">Heterotrimer of UreA (gamma), UreB (beta) and UreC (alpha) subunits. Three heterotrimers associate to form the active enzyme.</text>
</comment>
<comment type="subcellular location">
    <subcellularLocation>
        <location evidence="1">Cytoplasm</location>
    </subcellularLocation>
</comment>
<comment type="similarity">
    <text evidence="1">Belongs to the urease gamma subunit family.</text>
</comment>
<reference key="1">
    <citation type="submission" date="2008-03" db="EMBL/GenBank/DDBJ databases">
        <title>Complete sequence of Leptothrix cholodnii SP-6.</title>
        <authorList>
            <consortium name="US DOE Joint Genome Institute"/>
            <person name="Copeland A."/>
            <person name="Lucas S."/>
            <person name="Lapidus A."/>
            <person name="Glavina del Rio T."/>
            <person name="Dalin E."/>
            <person name="Tice H."/>
            <person name="Bruce D."/>
            <person name="Goodwin L."/>
            <person name="Pitluck S."/>
            <person name="Chertkov O."/>
            <person name="Brettin T."/>
            <person name="Detter J.C."/>
            <person name="Han C."/>
            <person name="Kuske C.R."/>
            <person name="Schmutz J."/>
            <person name="Larimer F."/>
            <person name="Land M."/>
            <person name="Hauser L."/>
            <person name="Kyrpides N."/>
            <person name="Lykidis A."/>
            <person name="Emerson D."/>
            <person name="Richardson P."/>
        </authorList>
    </citation>
    <scope>NUCLEOTIDE SEQUENCE [LARGE SCALE GENOMIC DNA]</scope>
    <source>
        <strain>ATCC 51168 / LMG 8142 / SP-6</strain>
    </source>
</reference>
<protein>
    <recommendedName>
        <fullName evidence="1">Urease subunit gamma</fullName>
        <ecNumber evidence="1">3.5.1.5</ecNumber>
    </recommendedName>
    <alternativeName>
        <fullName evidence="1">Urea amidohydrolase subunit gamma</fullName>
    </alternativeName>
</protein>
<keyword id="KW-0963">Cytoplasm</keyword>
<keyword id="KW-0378">Hydrolase</keyword>
<keyword id="KW-1185">Reference proteome</keyword>
<organism>
    <name type="scientific">Leptothrix cholodnii (strain ATCC 51168 / LMG 8142 / SP-6)</name>
    <name type="common">Leptothrix discophora (strain SP-6)</name>
    <dbReference type="NCBI Taxonomy" id="395495"/>
    <lineage>
        <taxon>Bacteria</taxon>
        <taxon>Pseudomonadati</taxon>
        <taxon>Pseudomonadota</taxon>
        <taxon>Betaproteobacteria</taxon>
        <taxon>Burkholderiales</taxon>
        <taxon>Sphaerotilaceae</taxon>
        <taxon>Leptothrix</taxon>
    </lineage>
</organism>
<feature type="chain" id="PRO_1000199868" description="Urease subunit gamma">
    <location>
        <begin position="1"/>
        <end position="100"/>
    </location>
</feature>
<dbReference type="EC" id="3.5.1.5" evidence="1"/>
<dbReference type="EMBL" id="CP001013">
    <property type="protein sequence ID" value="ACB33348.1"/>
    <property type="molecule type" value="Genomic_DNA"/>
</dbReference>
<dbReference type="RefSeq" id="WP_012346110.1">
    <property type="nucleotide sequence ID" value="NC_010524.1"/>
</dbReference>
<dbReference type="SMR" id="B1Y3V4"/>
<dbReference type="STRING" id="395495.Lcho_1079"/>
<dbReference type="KEGG" id="lch:Lcho_1079"/>
<dbReference type="eggNOG" id="COG0831">
    <property type="taxonomic scope" value="Bacteria"/>
</dbReference>
<dbReference type="HOGENOM" id="CLU_145825_1_0_4"/>
<dbReference type="OrthoDB" id="9797217at2"/>
<dbReference type="UniPathway" id="UPA00258">
    <property type="reaction ID" value="UER00370"/>
</dbReference>
<dbReference type="Proteomes" id="UP000001693">
    <property type="component" value="Chromosome"/>
</dbReference>
<dbReference type="GO" id="GO:0005737">
    <property type="term" value="C:cytoplasm"/>
    <property type="evidence" value="ECO:0007669"/>
    <property type="project" value="UniProtKB-SubCell"/>
</dbReference>
<dbReference type="GO" id="GO:0016151">
    <property type="term" value="F:nickel cation binding"/>
    <property type="evidence" value="ECO:0007669"/>
    <property type="project" value="InterPro"/>
</dbReference>
<dbReference type="GO" id="GO:0009039">
    <property type="term" value="F:urease activity"/>
    <property type="evidence" value="ECO:0007669"/>
    <property type="project" value="UniProtKB-UniRule"/>
</dbReference>
<dbReference type="GO" id="GO:0043419">
    <property type="term" value="P:urea catabolic process"/>
    <property type="evidence" value="ECO:0007669"/>
    <property type="project" value="UniProtKB-UniRule"/>
</dbReference>
<dbReference type="CDD" id="cd00390">
    <property type="entry name" value="Urease_gamma"/>
    <property type="match status" value="1"/>
</dbReference>
<dbReference type="Gene3D" id="3.30.280.10">
    <property type="entry name" value="Urease, gamma-like subunit"/>
    <property type="match status" value="1"/>
</dbReference>
<dbReference type="HAMAP" id="MF_00739">
    <property type="entry name" value="Urease_gamma"/>
    <property type="match status" value="1"/>
</dbReference>
<dbReference type="InterPro" id="IPR012010">
    <property type="entry name" value="Urease_gamma"/>
</dbReference>
<dbReference type="InterPro" id="IPR002026">
    <property type="entry name" value="Urease_gamma/gamma-beta_su"/>
</dbReference>
<dbReference type="InterPro" id="IPR036463">
    <property type="entry name" value="Urease_gamma_sf"/>
</dbReference>
<dbReference type="InterPro" id="IPR050069">
    <property type="entry name" value="Urease_subunit"/>
</dbReference>
<dbReference type="NCBIfam" id="NF009712">
    <property type="entry name" value="PRK13241.1"/>
    <property type="match status" value="1"/>
</dbReference>
<dbReference type="NCBIfam" id="TIGR00193">
    <property type="entry name" value="urease_gam"/>
    <property type="match status" value="1"/>
</dbReference>
<dbReference type="PANTHER" id="PTHR33569">
    <property type="entry name" value="UREASE"/>
    <property type="match status" value="1"/>
</dbReference>
<dbReference type="PANTHER" id="PTHR33569:SF1">
    <property type="entry name" value="UREASE"/>
    <property type="match status" value="1"/>
</dbReference>
<dbReference type="Pfam" id="PF00547">
    <property type="entry name" value="Urease_gamma"/>
    <property type="match status" value="1"/>
</dbReference>
<dbReference type="PIRSF" id="PIRSF001223">
    <property type="entry name" value="Urease_gamma"/>
    <property type="match status" value="1"/>
</dbReference>
<dbReference type="SUPFAM" id="SSF54111">
    <property type="entry name" value="Urease, gamma-subunit"/>
    <property type="match status" value="1"/>
</dbReference>
<proteinExistence type="inferred from homology"/>
<accession>B1Y3V4</accession>
<name>URE3_LEPCP</name>
<gene>
    <name evidence="1" type="primary">ureA</name>
    <name type="ordered locus">Lcho_1079</name>
</gene>
<sequence length="100" mass="10940">MELTPREKDKLLIFTAALLAERRKARGLKLNYPEAVALISAAIMEGARDGKSVAELMSDGKRVLARHEVMDGVAEMIPDIQIEATFPDGTKLVTVHQPIA</sequence>